<gene>
    <name evidence="1" type="primary">ruvB</name>
    <name type="ordered locus">Mlg_2777</name>
</gene>
<proteinExistence type="inferred from homology"/>
<feature type="chain" id="PRO_1000057136" description="Holliday junction branch migration complex subunit RuvB">
    <location>
        <begin position="1"/>
        <end position="351"/>
    </location>
</feature>
<feature type="region of interest" description="Large ATPase domain (RuvB-L)" evidence="1">
    <location>
        <begin position="1"/>
        <end position="182"/>
    </location>
</feature>
<feature type="region of interest" description="Small ATPAse domain (RuvB-S)" evidence="1">
    <location>
        <begin position="183"/>
        <end position="253"/>
    </location>
</feature>
<feature type="region of interest" description="Head domain (RuvB-H)" evidence="1">
    <location>
        <begin position="256"/>
        <end position="351"/>
    </location>
</feature>
<feature type="region of interest" description="Disordered" evidence="2">
    <location>
        <begin position="328"/>
        <end position="351"/>
    </location>
</feature>
<feature type="binding site" evidence="1">
    <location>
        <position position="21"/>
    </location>
    <ligand>
        <name>ATP</name>
        <dbReference type="ChEBI" id="CHEBI:30616"/>
    </ligand>
</feature>
<feature type="binding site" evidence="1">
    <location>
        <position position="22"/>
    </location>
    <ligand>
        <name>ATP</name>
        <dbReference type="ChEBI" id="CHEBI:30616"/>
    </ligand>
</feature>
<feature type="binding site" evidence="1">
    <location>
        <position position="63"/>
    </location>
    <ligand>
        <name>ATP</name>
        <dbReference type="ChEBI" id="CHEBI:30616"/>
    </ligand>
</feature>
<feature type="binding site" evidence="1">
    <location>
        <position position="66"/>
    </location>
    <ligand>
        <name>ATP</name>
        <dbReference type="ChEBI" id="CHEBI:30616"/>
    </ligand>
</feature>
<feature type="binding site" evidence="1">
    <location>
        <position position="67"/>
    </location>
    <ligand>
        <name>ATP</name>
        <dbReference type="ChEBI" id="CHEBI:30616"/>
    </ligand>
</feature>
<feature type="binding site" evidence="1">
    <location>
        <position position="67"/>
    </location>
    <ligand>
        <name>Mg(2+)</name>
        <dbReference type="ChEBI" id="CHEBI:18420"/>
    </ligand>
</feature>
<feature type="binding site" evidence="1">
    <location>
        <position position="68"/>
    </location>
    <ligand>
        <name>ATP</name>
        <dbReference type="ChEBI" id="CHEBI:30616"/>
    </ligand>
</feature>
<feature type="binding site" evidence="1">
    <location>
        <begin position="129"/>
        <end position="131"/>
    </location>
    <ligand>
        <name>ATP</name>
        <dbReference type="ChEBI" id="CHEBI:30616"/>
    </ligand>
</feature>
<feature type="binding site" evidence="1">
    <location>
        <position position="172"/>
    </location>
    <ligand>
        <name>ATP</name>
        <dbReference type="ChEBI" id="CHEBI:30616"/>
    </ligand>
</feature>
<feature type="binding site" evidence="1">
    <location>
        <position position="182"/>
    </location>
    <ligand>
        <name>ATP</name>
        <dbReference type="ChEBI" id="CHEBI:30616"/>
    </ligand>
</feature>
<feature type="binding site" evidence="1">
    <location>
        <position position="219"/>
    </location>
    <ligand>
        <name>ATP</name>
        <dbReference type="ChEBI" id="CHEBI:30616"/>
    </ligand>
</feature>
<feature type="binding site" evidence="1">
    <location>
        <position position="292"/>
    </location>
    <ligand>
        <name>DNA</name>
        <dbReference type="ChEBI" id="CHEBI:16991"/>
    </ligand>
</feature>
<feature type="binding site" evidence="1">
    <location>
        <position position="311"/>
    </location>
    <ligand>
        <name>DNA</name>
        <dbReference type="ChEBI" id="CHEBI:16991"/>
    </ligand>
</feature>
<feature type="binding site" evidence="1">
    <location>
        <position position="316"/>
    </location>
    <ligand>
        <name>DNA</name>
        <dbReference type="ChEBI" id="CHEBI:16991"/>
    </ligand>
</feature>
<organism>
    <name type="scientific">Alkalilimnicola ehrlichii (strain ATCC BAA-1101 / DSM 17681 / MLHE-1)</name>
    <dbReference type="NCBI Taxonomy" id="187272"/>
    <lineage>
        <taxon>Bacteria</taxon>
        <taxon>Pseudomonadati</taxon>
        <taxon>Pseudomonadota</taxon>
        <taxon>Gammaproteobacteria</taxon>
        <taxon>Chromatiales</taxon>
        <taxon>Ectothiorhodospiraceae</taxon>
        <taxon>Alkalilimnicola</taxon>
    </lineage>
</organism>
<keyword id="KW-0067">ATP-binding</keyword>
<keyword id="KW-0963">Cytoplasm</keyword>
<keyword id="KW-0227">DNA damage</keyword>
<keyword id="KW-0233">DNA recombination</keyword>
<keyword id="KW-0234">DNA repair</keyword>
<keyword id="KW-0238">DNA-binding</keyword>
<keyword id="KW-0378">Hydrolase</keyword>
<keyword id="KW-0547">Nucleotide-binding</keyword>
<keyword id="KW-1185">Reference proteome</keyword>
<accession>Q0A4X0</accession>
<comment type="function">
    <text evidence="1">The RuvA-RuvB-RuvC complex processes Holliday junction (HJ) DNA during genetic recombination and DNA repair, while the RuvA-RuvB complex plays an important role in the rescue of blocked DNA replication forks via replication fork reversal (RFR). RuvA specifically binds to HJ cruciform DNA, conferring on it an open structure. The RuvB hexamer acts as an ATP-dependent pump, pulling dsDNA into and through the RuvAB complex. RuvB forms 2 homohexamers on either side of HJ DNA bound by 1 or 2 RuvA tetramers; 4 subunits per hexamer contact DNA at a time. Coordinated motions by a converter formed by DNA-disengaged RuvB subunits stimulates ATP hydrolysis and nucleotide exchange. Immobilization of the converter enables RuvB to convert the ATP-contained energy into a lever motion, pulling 2 nucleotides of DNA out of the RuvA tetramer per ATP hydrolyzed, thus driving DNA branch migration. The RuvB motors rotate together with the DNA substrate, which together with the progressing nucleotide cycle form the mechanistic basis for DNA recombination by continuous HJ branch migration. Branch migration allows RuvC to scan DNA until it finds its consensus sequence, where it cleaves and resolves cruciform DNA.</text>
</comment>
<comment type="catalytic activity">
    <reaction evidence="1">
        <text>ATP + H2O = ADP + phosphate + H(+)</text>
        <dbReference type="Rhea" id="RHEA:13065"/>
        <dbReference type="ChEBI" id="CHEBI:15377"/>
        <dbReference type="ChEBI" id="CHEBI:15378"/>
        <dbReference type="ChEBI" id="CHEBI:30616"/>
        <dbReference type="ChEBI" id="CHEBI:43474"/>
        <dbReference type="ChEBI" id="CHEBI:456216"/>
    </reaction>
</comment>
<comment type="subunit">
    <text evidence="1">Homohexamer. Forms an RuvA(8)-RuvB(12)-Holliday junction (HJ) complex. HJ DNA is sandwiched between 2 RuvA tetramers; dsDNA enters through RuvA and exits via RuvB. An RuvB hexamer assembles on each DNA strand where it exits the tetramer. Each RuvB hexamer is contacted by two RuvA subunits (via domain III) on 2 adjacent RuvB subunits; this complex drives branch migration. In the full resolvosome a probable DNA-RuvA(4)-RuvB(12)-RuvC(2) complex forms which resolves the HJ.</text>
</comment>
<comment type="subcellular location">
    <subcellularLocation>
        <location evidence="1">Cytoplasm</location>
    </subcellularLocation>
</comment>
<comment type="domain">
    <text evidence="1">Has 3 domains, the large (RuvB-L) and small ATPase (RuvB-S) domains and the C-terminal head (RuvB-H) domain. The head domain binds DNA, while the ATPase domains jointly bind ATP, ADP or are empty depending on the state of the subunit in the translocation cycle. During a single DNA translocation step the structure of each domain remains the same, but their relative positions change.</text>
</comment>
<comment type="similarity">
    <text evidence="1">Belongs to the RuvB family.</text>
</comment>
<protein>
    <recommendedName>
        <fullName evidence="1">Holliday junction branch migration complex subunit RuvB</fullName>
        <ecNumber evidence="1">3.6.4.-</ecNumber>
    </recommendedName>
</protein>
<dbReference type="EC" id="3.6.4.-" evidence="1"/>
<dbReference type="EMBL" id="CP000453">
    <property type="protein sequence ID" value="ABI58117.1"/>
    <property type="molecule type" value="Genomic_DNA"/>
</dbReference>
<dbReference type="RefSeq" id="WP_011630510.1">
    <property type="nucleotide sequence ID" value="NC_008340.1"/>
</dbReference>
<dbReference type="SMR" id="Q0A4X0"/>
<dbReference type="KEGG" id="aeh:Mlg_2777"/>
<dbReference type="eggNOG" id="COG2255">
    <property type="taxonomic scope" value="Bacteria"/>
</dbReference>
<dbReference type="HOGENOM" id="CLU_055599_1_0_6"/>
<dbReference type="OrthoDB" id="9804478at2"/>
<dbReference type="Proteomes" id="UP000001962">
    <property type="component" value="Chromosome"/>
</dbReference>
<dbReference type="GO" id="GO:0005737">
    <property type="term" value="C:cytoplasm"/>
    <property type="evidence" value="ECO:0007669"/>
    <property type="project" value="UniProtKB-SubCell"/>
</dbReference>
<dbReference type="GO" id="GO:0048476">
    <property type="term" value="C:Holliday junction resolvase complex"/>
    <property type="evidence" value="ECO:0007669"/>
    <property type="project" value="UniProtKB-UniRule"/>
</dbReference>
<dbReference type="GO" id="GO:0005524">
    <property type="term" value="F:ATP binding"/>
    <property type="evidence" value="ECO:0007669"/>
    <property type="project" value="UniProtKB-UniRule"/>
</dbReference>
<dbReference type="GO" id="GO:0016887">
    <property type="term" value="F:ATP hydrolysis activity"/>
    <property type="evidence" value="ECO:0007669"/>
    <property type="project" value="InterPro"/>
</dbReference>
<dbReference type="GO" id="GO:0000400">
    <property type="term" value="F:four-way junction DNA binding"/>
    <property type="evidence" value="ECO:0007669"/>
    <property type="project" value="UniProtKB-UniRule"/>
</dbReference>
<dbReference type="GO" id="GO:0009378">
    <property type="term" value="F:four-way junction helicase activity"/>
    <property type="evidence" value="ECO:0007669"/>
    <property type="project" value="InterPro"/>
</dbReference>
<dbReference type="GO" id="GO:0006310">
    <property type="term" value="P:DNA recombination"/>
    <property type="evidence" value="ECO:0007669"/>
    <property type="project" value="UniProtKB-UniRule"/>
</dbReference>
<dbReference type="GO" id="GO:0006281">
    <property type="term" value="P:DNA repair"/>
    <property type="evidence" value="ECO:0007669"/>
    <property type="project" value="UniProtKB-UniRule"/>
</dbReference>
<dbReference type="CDD" id="cd00009">
    <property type="entry name" value="AAA"/>
    <property type="match status" value="1"/>
</dbReference>
<dbReference type="FunFam" id="1.10.10.10:FF:000086">
    <property type="entry name" value="Holliday junction ATP-dependent DNA helicase RuvB"/>
    <property type="match status" value="1"/>
</dbReference>
<dbReference type="FunFam" id="3.40.50.300:FF:000073">
    <property type="entry name" value="Holliday junction ATP-dependent DNA helicase RuvB"/>
    <property type="match status" value="1"/>
</dbReference>
<dbReference type="Gene3D" id="1.10.8.60">
    <property type="match status" value="1"/>
</dbReference>
<dbReference type="Gene3D" id="3.40.50.300">
    <property type="entry name" value="P-loop containing nucleotide triphosphate hydrolases"/>
    <property type="match status" value="1"/>
</dbReference>
<dbReference type="Gene3D" id="1.10.10.10">
    <property type="entry name" value="Winged helix-like DNA-binding domain superfamily/Winged helix DNA-binding domain"/>
    <property type="match status" value="1"/>
</dbReference>
<dbReference type="HAMAP" id="MF_00016">
    <property type="entry name" value="DNA_HJ_migration_RuvB"/>
    <property type="match status" value="1"/>
</dbReference>
<dbReference type="InterPro" id="IPR003593">
    <property type="entry name" value="AAA+_ATPase"/>
</dbReference>
<dbReference type="InterPro" id="IPR041445">
    <property type="entry name" value="AAA_lid_4"/>
</dbReference>
<dbReference type="InterPro" id="IPR004605">
    <property type="entry name" value="DNA_helicase_Holl-junc_RuvB"/>
</dbReference>
<dbReference type="InterPro" id="IPR027417">
    <property type="entry name" value="P-loop_NTPase"/>
</dbReference>
<dbReference type="InterPro" id="IPR008824">
    <property type="entry name" value="RuvB-like_N"/>
</dbReference>
<dbReference type="InterPro" id="IPR008823">
    <property type="entry name" value="RuvB_C"/>
</dbReference>
<dbReference type="InterPro" id="IPR036388">
    <property type="entry name" value="WH-like_DNA-bd_sf"/>
</dbReference>
<dbReference type="InterPro" id="IPR036390">
    <property type="entry name" value="WH_DNA-bd_sf"/>
</dbReference>
<dbReference type="NCBIfam" id="NF000868">
    <property type="entry name" value="PRK00080.1"/>
    <property type="match status" value="1"/>
</dbReference>
<dbReference type="NCBIfam" id="TIGR00635">
    <property type="entry name" value="ruvB"/>
    <property type="match status" value="1"/>
</dbReference>
<dbReference type="PANTHER" id="PTHR42848">
    <property type="match status" value="1"/>
</dbReference>
<dbReference type="PANTHER" id="PTHR42848:SF1">
    <property type="entry name" value="HOLLIDAY JUNCTION BRANCH MIGRATION COMPLEX SUBUNIT RUVB"/>
    <property type="match status" value="1"/>
</dbReference>
<dbReference type="Pfam" id="PF17864">
    <property type="entry name" value="AAA_lid_4"/>
    <property type="match status" value="1"/>
</dbReference>
<dbReference type="Pfam" id="PF05491">
    <property type="entry name" value="RuvB_C"/>
    <property type="match status" value="1"/>
</dbReference>
<dbReference type="Pfam" id="PF05496">
    <property type="entry name" value="RuvB_N"/>
    <property type="match status" value="1"/>
</dbReference>
<dbReference type="SMART" id="SM00382">
    <property type="entry name" value="AAA"/>
    <property type="match status" value="1"/>
</dbReference>
<dbReference type="SUPFAM" id="SSF52540">
    <property type="entry name" value="P-loop containing nucleoside triphosphate hydrolases"/>
    <property type="match status" value="1"/>
</dbReference>
<dbReference type="SUPFAM" id="SSF46785">
    <property type="entry name" value="Winged helix' DNA-binding domain"/>
    <property type="match status" value="1"/>
</dbReference>
<name>RUVB_ALKEH</name>
<sequence>MNDRLITPDASGEDEAIDRAIRPRRLTDYIGQPVVREQMEIFVHAARGRGEALDHTLIFGPPGLGKTTLAHIIANEMGVSMRQTSGPVLDKPGDLAALLTNLEPHDVLFVDEIHRLSAVVEEVLYPAMEDFQIDIMIGEGPAARSIKLDLPPFTLVGATTRAGLLTSPLRDRFGIVQRLEYYNVADLSGIVKRSAHLLNLSIDETGCQEIAGRARGTPRIANRLLRRVRDYAEVRADGHISGEVAHAAMELLNVDRNGFDEQDRRLLLAIMEKFDGGPVGLDSIAAAIGEERGTIEDVVEPYLIQQGYLMRTPRGRMATRNAWLHFGLNPPRQPDTSPDLFQDAPPVGRER</sequence>
<evidence type="ECO:0000255" key="1">
    <source>
        <dbReference type="HAMAP-Rule" id="MF_00016"/>
    </source>
</evidence>
<evidence type="ECO:0000256" key="2">
    <source>
        <dbReference type="SAM" id="MobiDB-lite"/>
    </source>
</evidence>
<reference key="1">
    <citation type="submission" date="2006-08" db="EMBL/GenBank/DDBJ databases">
        <title>Complete sequence of Alkalilimnicola ehrilichei MLHE-1.</title>
        <authorList>
            <person name="Copeland A."/>
            <person name="Lucas S."/>
            <person name="Lapidus A."/>
            <person name="Barry K."/>
            <person name="Detter J.C."/>
            <person name="Glavina del Rio T."/>
            <person name="Hammon N."/>
            <person name="Israni S."/>
            <person name="Dalin E."/>
            <person name="Tice H."/>
            <person name="Pitluck S."/>
            <person name="Sims D."/>
            <person name="Brettin T."/>
            <person name="Bruce D."/>
            <person name="Han C."/>
            <person name="Tapia R."/>
            <person name="Gilna P."/>
            <person name="Schmutz J."/>
            <person name="Larimer F."/>
            <person name="Land M."/>
            <person name="Hauser L."/>
            <person name="Kyrpides N."/>
            <person name="Mikhailova N."/>
            <person name="Oremland R.S."/>
            <person name="Hoeft S.E."/>
            <person name="Switzer-Blum J."/>
            <person name="Kulp T."/>
            <person name="King G."/>
            <person name="Tabita R."/>
            <person name="Witte B."/>
            <person name="Santini J.M."/>
            <person name="Basu P."/>
            <person name="Hollibaugh J.T."/>
            <person name="Xie G."/>
            <person name="Stolz J.F."/>
            <person name="Richardson P."/>
        </authorList>
    </citation>
    <scope>NUCLEOTIDE SEQUENCE [LARGE SCALE GENOMIC DNA]</scope>
    <source>
        <strain>ATCC BAA-1101 / DSM 17681 / MLHE-1</strain>
    </source>
</reference>